<sequence length="358" mass="37446">MAQAAVERRVFRLSVDEETVVAAGVGALSEAPRAAGGTAYIVHEEALSAEAARLARILEARGVEVLGAVAGGGERVKSLDWVTRLWDLMLQAGVERSTTVYIIGGGALLDAAGFAASTLMRGLSTVNIPSTTLAAFDAAAGGKTGVNLRGKNMVGTFHNPRMVLVEPGIVAGQPDEGYRDGFAELVKHVALSGDREPAASLLPQALARRPAPLARLAFWSLGYKMQVVAGDPRERGLRRILNLGHTIGHALEAASSYTLSHGRSVSIGLAGELELSRRLAGLPRGEAEDVLDMLSTAGLPLEPPPGLAGEAAGLVGLDKKREGGSIVMPLLERLGRPRLSRVPVETVSRLMVELWGGG</sequence>
<evidence type="ECO:0000250" key="1">
    <source>
        <dbReference type="UniProtKB" id="P07639"/>
    </source>
</evidence>
<evidence type="ECO:0000250" key="2">
    <source>
        <dbReference type="UniProtKB" id="P9WPX9"/>
    </source>
</evidence>
<evidence type="ECO:0000250" key="3">
    <source>
        <dbReference type="UniProtKB" id="Q6GGU4"/>
    </source>
</evidence>
<evidence type="ECO:0000305" key="4"/>
<organism>
    <name type="scientific">Aeropyrum pernix (strain ATCC 700893 / DSM 11879 / JCM 9820 / NBRC 100138 / K1)</name>
    <dbReference type="NCBI Taxonomy" id="272557"/>
    <lineage>
        <taxon>Archaea</taxon>
        <taxon>Thermoproteota</taxon>
        <taxon>Thermoprotei</taxon>
        <taxon>Desulfurococcales</taxon>
        <taxon>Desulfurococcaceae</taxon>
        <taxon>Aeropyrum</taxon>
    </lineage>
</organism>
<reference key="1">
    <citation type="journal article" date="1999" name="DNA Res.">
        <title>Complete genome sequence of an aerobic hyper-thermophilic crenarchaeon, Aeropyrum pernix K1.</title>
        <authorList>
            <person name="Kawarabayasi Y."/>
            <person name="Hino Y."/>
            <person name="Horikawa H."/>
            <person name="Yamazaki S."/>
            <person name="Haikawa Y."/>
            <person name="Jin-no K."/>
            <person name="Takahashi M."/>
            <person name="Sekine M."/>
            <person name="Baba S."/>
            <person name="Ankai A."/>
            <person name="Kosugi H."/>
            <person name="Hosoyama A."/>
            <person name="Fukui S."/>
            <person name="Nagai Y."/>
            <person name="Nishijima K."/>
            <person name="Nakazawa H."/>
            <person name="Takamiya M."/>
            <person name="Masuda S."/>
            <person name="Funahashi T."/>
            <person name="Tanaka T."/>
            <person name="Kudoh Y."/>
            <person name="Yamazaki J."/>
            <person name="Kushida N."/>
            <person name="Oguchi A."/>
            <person name="Aoki K."/>
            <person name="Kubota K."/>
            <person name="Nakamura Y."/>
            <person name="Nomura N."/>
            <person name="Sako Y."/>
            <person name="Kikuchi H."/>
        </authorList>
    </citation>
    <scope>NUCLEOTIDE SEQUENCE [LARGE SCALE GENOMIC DNA]</scope>
    <source>
        <strain>ATCC 700893 / DSM 11879 / JCM 9820 / NBRC 100138 / K1</strain>
    </source>
</reference>
<name>AROB_AERPE</name>
<protein>
    <recommendedName>
        <fullName evidence="1">3-dehydroquinate synthase</fullName>
        <shortName evidence="1">DHQS</shortName>
        <ecNumber evidence="1">4.2.3.4</ecNumber>
    </recommendedName>
</protein>
<accession>Q9YEJ9</accession>
<dbReference type="EC" id="4.2.3.4" evidence="1"/>
<dbReference type="EMBL" id="BA000002">
    <property type="protein sequence ID" value="BAA79547.1"/>
    <property type="molecule type" value="Genomic_DNA"/>
</dbReference>
<dbReference type="PIR" id="C72643">
    <property type="entry name" value="C72643"/>
</dbReference>
<dbReference type="RefSeq" id="WP_010865843.1">
    <property type="nucleotide sequence ID" value="NC_000854.2"/>
</dbReference>
<dbReference type="SMR" id="Q9YEJ9"/>
<dbReference type="STRING" id="272557.APE_0579"/>
<dbReference type="EnsemblBacteria" id="BAA79547">
    <property type="protein sequence ID" value="BAA79547"/>
    <property type="gene ID" value="APE_0579"/>
</dbReference>
<dbReference type="GeneID" id="1444736"/>
<dbReference type="KEGG" id="ape:APE_0579"/>
<dbReference type="PATRIC" id="fig|272557.25.peg.428"/>
<dbReference type="eggNOG" id="arCOG00983">
    <property type="taxonomic scope" value="Archaea"/>
</dbReference>
<dbReference type="UniPathway" id="UPA00053">
    <property type="reaction ID" value="UER00085"/>
</dbReference>
<dbReference type="Proteomes" id="UP000002518">
    <property type="component" value="Chromosome"/>
</dbReference>
<dbReference type="GO" id="GO:0005737">
    <property type="term" value="C:cytoplasm"/>
    <property type="evidence" value="ECO:0007669"/>
    <property type="project" value="UniProtKB-SubCell"/>
</dbReference>
<dbReference type="GO" id="GO:0003856">
    <property type="term" value="F:3-dehydroquinate synthase activity"/>
    <property type="evidence" value="ECO:0007669"/>
    <property type="project" value="UniProtKB-EC"/>
</dbReference>
<dbReference type="GO" id="GO:0046872">
    <property type="term" value="F:metal ion binding"/>
    <property type="evidence" value="ECO:0007669"/>
    <property type="project" value="UniProtKB-KW"/>
</dbReference>
<dbReference type="GO" id="GO:0000166">
    <property type="term" value="F:nucleotide binding"/>
    <property type="evidence" value="ECO:0007669"/>
    <property type="project" value="UniProtKB-KW"/>
</dbReference>
<dbReference type="GO" id="GO:0008652">
    <property type="term" value="P:amino acid biosynthetic process"/>
    <property type="evidence" value="ECO:0007669"/>
    <property type="project" value="UniProtKB-KW"/>
</dbReference>
<dbReference type="GO" id="GO:0009073">
    <property type="term" value="P:aromatic amino acid family biosynthetic process"/>
    <property type="evidence" value="ECO:0007669"/>
    <property type="project" value="UniProtKB-KW"/>
</dbReference>
<dbReference type="GO" id="GO:0009423">
    <property type="term" value="P:chorismate biosynthetic process"/>
    <property type="evidence" value="ECO:0007669"/>
    <property type="project" value="UniProtKB-UniPathway"/>
</dbReference>
<dbReference type="CDD" id="cd08195">
    <property type="entry name" value="DHQS"/>
    <property type="match status" value="1"/>
</dbReference>
<dbReference type="Gene3D" id="3.40.50.1970">
    <property type="match status" value="1"/>
</dbReference>
<dbReference type="Gene3D" id="1.20.1090.10">
    <property type="entry name" value="Dehydroquinate synthase-like - alpha domain"/>
    <property type="match status" value="1"/>
</dbReference>
<dbReference type="InterPro" id="IPR050071">
    <property type="entry name" value="Dehydroquinate_synthase"/>
</dbReference>
<dbReference type="InterPro" id="IPR016037">
    <property type="entry name" value="DHQ_synth_AroB"/>
</dbReference>
<dbReference type="InterPro" id="IPR030963">
    <property type="entry name" value="DHQ_synth_fam"/>
</dbReference>
<dbReference type="InterPro" id="IPR030960">
    <property type="entry name" value="DHQS/DOIS_N"/>
</dbReference>
<dbReference type="InterPro" id="IPR056179">
    <property type="entry name" value="DHQS_C"/>
</dbReference>
<dbReference type="NCBIfam" id="TIGR01357">
    <property type="entry name" value="aroB"/>
    <property type="match status" value="1"/>
</dbReference>
<dbReference type="PANTHER" id="PTHR43622">
    <property type="entry name" value="3-DEHYDROQUINATE SYNTHASE"/>
    <property type="match status" value="1"/>
</dbReference>
<dbReference type="PANTHER" id="PTHR43622:SF1">
    <property type="entry name" value="3-DEHYDROQUINATE SYNTHASE"/>
    <property type="match status" value="1"/>
</dbReference>
<dbReference type="Pfam" id="PF01761">
    <property type="entry name" value="DHQ_synthase"/>
    <property type="match status" value="1"/>
</dbReference>
<dbReference type="Pfam" id="PF24621">
    <property type="entry name" value="DHQS_C"/>
    <property type="match status" value="1"/>
</dbReference>
<dbReference type="PIRSF" id="PIRSF001455">
    <property type="entry name" value="DHQ_synth"/>
    <property type="match status" value="1"/>
</dbReference>
<dbReference type="SUPFAM" id="SSF56796">
    <property type="entry name" value="Dehydroquinate synthase-like"/>
    <property type="match status" value="1"/>
</dbReference>
<gene>
    <name type="primary">aroB</name>
    <name type="ordered locus">APE_0579</name>
</gene>
<proteinExistence type="inferred from homology"/>
<feature type="chain" id="PRO_0000140815" description="3-dehydroquinate synthase">
    <location>
        <begin position="1"/>
        <end position="358"/>
    </location>
</feature>
<feature type="binding site" evidence="2">
    <location>
        <begin position="72"/>
        <end position="77"/>
    </location>
    <ligand>
        <name>NAD(+)</name>
        <dbReference type="ChEBI" id="CHEBI:57540"/>
    </ligand>
</feature>
<feature type="binding site" evidence="2">
    <location>
        <begin position="106"/>
        <end position="110"/>
    </location>
    <ligand>
        <name>NAD(+)</name>
        <dbReference type="ChEBI" id="CHEBI:57540"/>
    </ligand>
</feature>
<feature type="binding site" evidence="2">
    <location>
        <begin position="130"/>
        <end position="131"/>
    </location>
    <ligand>
        <name>NAD(+)</name>
        <dbReference type="ChEBI" id="CHEBI:57540"/>
    </ligand>
</feature>
<feature type="binding site" evidence="2">
    <location>
        <position position="143"/>
    </location>
    <ligand>
        <name>NAD(+)</name>
        <dbReference type="ChEBI" id="CHEBI:57540"/>
    </ligand>
</feature>
<feature type="binding site" evidence="3">
    <location>
        <position position="151"/>
    </location>
    <ligand>
        <name>NAD(+)</name>
        <dbReference type="ChEBI" id="CHEBI:57540"/>
    </ligand>
</feature>
<feature type="binding site" evidence="2">
    <location>
        <position position="184"/>
    </location>
    <ligand>
        <name>Zn(2+)</name>
        <dbReference type="ChEBI" id="CHEBI:29105"/>
    </ligand>
</feature>
<feature type="binding site" evidence="2">
    <location>
        <position position="245"/>
    </location>
    <ligand>
        <name>Zn(2+)</name>
        <dbReference type="ChEBI" id="CHEBI:29105"/>
    </ligand>
</feature>
<feature type="binding site" evidence="2">
    <location>
        <position position="261"/>
    </location>
    <ligand>
        <name>Zn(2+)</name>
        <dbReference type="ChEBI" id="CHEBI:29105"/>
    </ligand>
</feature>
<keyword id="KW-0028">Amino-acid biosynthesis</keyword>
<keyword id="KW-0057">Aromatic amino acid biosynthesis</keyword>
<keyword id="KW-0170">Cobalt</keyword>
<keyword id="KW-0963">Cytoplasm</keyword>
<keyword id="KW-0456">Lyase</keyword>
<keyword id="KW-0479">Metal-binding</keyword>
<keyword id="KW-0520">NAD</keyword>
<keyword id="KW-0547">Nucleotide-binding</keyword>
<keyword id="KW-1185">Reference proteome</keyword>
<keyword id="KW-0862">Zinc</keyword>
<comment type="function">
    <text evidence="1">Catalyzes the conversion of 3-deoxy-D-arabino-heptulosonate 7-phosphate (DAHP) to dehydroquinate (DHQ).</text>
</comment>
<comment type="catalytic activity">
    <reaction evidence="1">
        <text>7-phospho-2-dehydro-3-deoxy-D-arabino-heptonate = 3-dehydroquinate + phosphate</text>
        <dbReference type="Rhea" id="RHEA:21968"/>
        <dbReference type="ChEBI" id="CHEBI:32364"/>
        <dbReference type="ChEBI" id="CHEBI:43474"/>
        <dbReference type="ChEBI" id="CHEBI:58394"/>
        <dbReference type="EC" id="4.2.3.4"/>
    </reaction>
</comment>
<comment type="cofactor">
    <cofactor evidence="1">
        <name>NAD(+)</name>
        <dbReference type="ChEBI" id="CHEBI:57540"/>
    </cofactor>
</comment>
<comment type="cofactor">
    <cofactor evidence="1">
        <name>Co(2+)</name>
        <dbReference type="ChEBI" id="CHEBI:48828"/>
    </cofactor>
    <cofactor evidence="1">
        <name>Zn(2+)</name>
        <dbReference type="ChEBI" id="CHEBI:29105"/>
    </cofactor>
    <text evidence="1">Binds 1 divalent metal cation per subunit. Can use either Co(2+) or Zn(2+).</text>
</comment>
<comment type="pathway">
    <text evidence="1">Metabolic intermediate biosynthesis; chorismate biosynthesis; chorismate from D-erythrose 4-phosphate and phosphoenolpyruvate: step 2/7.</text>
</comment>
<comment type="subcellular location">
    <subcellularLocation>
        <location evidence="1">Cytoplasm</location>
    </subcellularLocation>
</comment>
<comment type="similarity">
    <text evidence="4">Belongs to the sugar phosphate cyclases superfamily. Dehydroquinate synthase family.</text>
</comment>